<reference key="1">
    <citation type="journal article" date="2000" name="Science">
        <title>Molecular evidence for the early evolution of photosynthesis.</title>
        <authorList>
            <person name="Xiong J."/>
            <person name="Fischer W.M."/>
            <person name="Inoue K."/>
            <person name="Nakahara M."/>
            <person name="Bauer C.E."/>
        </authorList>
    </citation>
    <scope>NUCLEOTIDE SEQUENCE [GENOMIC DNA]</scope>
</reference>
<reference key="2">
    <citation type="journal article" date="2002" name="Proc. Natl. Acad. Sci. U.S.A.">
        <title>The complete genome sequence of Chlorobium tepidum TLS, a photosynthetic, anaerobic, green-sulfur bacterium.</title>
        <authorList>
            <person name="Eisen J.A."/>
            <person name="Nelson K.E."/>
            <person name="Paulsen I.T."/>
            <person name="Heidelberg J.F."/>
            <person name="Wu M."/>
            <person name="Dodson R.J."/>
            <person name="DeBoy R.T."/>
            <person name="Gwinn M.L."/>
            <person name="Nelson W.C."/>
            <person name="Haft D.H."/>
            <person name="Hickey E.K."/>
            <person name="Peterson J.D."/>
            <person name="Durkin A.S."/>
            <person name="Kolonay J.F."/>
            <person name="Yang F."/>
            <person name="Holt I.E."/>
            <person name="Umayam L.A."/>
            <person name="Mason T.M."/>
            <person name="Brenner M."/>
            <person name="Shea T.P."/>
            <person name="Parksey D.S."/>
            <person name="Nierman W.C."/>
            <person name="Feldblyum T.V."/>
            <person name="Hansen C.L."/>
            <person name="Craven M.B."/>
            <person name="Radune D."/>
            <person name="Vamathevan J.J."/>
            <person name="Khouri H.M."/>
            <person name="White O."/>
            <person name="Gruber T.M."/>
            <person name="Ketchum K.A."/>
            <person name="Venter J.C."/>
            <person name="Tettelin H."/>
            <person name="Bryant D.A."/>
            <person name="Fraser C.M."/>
        </authorList>
    </citation>
    <scope>NUCLEOTIDE SEQUENCE [LARGE SCALE GENOMIC DNA]</scope>
    <source>
        <strain>ATCC 49652 / DSM 12025 / NBRC 103806 / TLS</strain>
    </source>
</reference>
<proteinExistence type="inferred from homology"/>
<gene>
    <name type="primary">bchI</name>
    <name type="synonym">chlI</name>
    <name type="ordered locus">CT1297</name>
</gene>
<evidence type="ECO:0000255" key="1"/>
<evidence type="ECO:0000256" key="2">
    <source>
        <dbReference type="SAM" id="MobiDB-lite"/>
    </source>
</evidence>
<evidence type="ECO:0000305" key="3"/>
<comment type="function">
    <text>Involved in bacteriochlorophyll biosynthesis; introduces a magnesium ion into protoporphyrin IX to yield Mg-protoporphyrin IX.</text>
</comment>
<comment type="catalytic activity">
    <reaction>
        <text>protoporphyrin IX + Mg(2+) + ATP + H2O = Mg-protoporphyrin IX + ADP + phosphate + 3 H(+)</text>
        <dbReference type="Rhea" id="RHEA:13961"/>
        <dbReference type="ChEBI" id="CHEBI:15377"/>
        <dbReference type="ChEBI" id="CHEBI:15378"/>
        <dbReference type="ChEBI" id="CHEBI:18420"/>
        <dbReference type="ChEBI" id="CHEBI:30616"/>
        <dbReference type="ChEBI" id="CHEBI:43474"/>
        <dbReference type="ChEBI" id="CHEBI:57306"/>
        <dbReference type="ChEBI" id="CHEBI:60492"/>
        <dbReference type="ChEBI" id="CHEBI:456216"/>
        <dbReference type="EC" id="6.6.1.1"/>
    </reaction>
</comment>
<comment type="pathway">
    <text>Porphyrin-containing compound metabolism; bacteriochlorophyll biosynthesis.</text>
</comment>
<comment type="similarity">
    <text evidence="3">Belongs to the Mg-chelatase subunits D/I family.</text>
</comment>
<dbReference type="EC" id="6.6.1.1"/>
<dbReference type="EMBL" id="AY005135">
    <property type="protein sequence ID" value="AAG12405.1"/>
    <property type="molecule type" value="Genomic_DNA"/>
</dbReference>
<dbReference type="EMBL" id="AE006470">
    <property type="protein sequence ID" value="AAM72527.1"/>
    <property type="molecule type" value="Genomic_DNA"/>
</dbReference>
<dbReference type="RefSeq" id="NP_662185.1">
    <property type="nucleotide sequence ID" value="NC_002932.3"/>
</dbReference>
<dbReference type="RefSeq" id="WP_010932966.1">
    <property type="nucleotide sequence ID" value="NC_002932.3"/>
</dbReference>
<dbReference type="SMR" id="Q93SW1"/>
<dbReference type="STRING" id="194439.CT1297"/>
<dbReference type="EnsemblBacteria" id="AAM72527">
    <property type="protein sequence ID" value="AAM72527"/>
    <property type="gene ID" value="CT1297"/>
</dbReference>
<dbReference type="KEGG" id="cte:CT1297"/>
<dbReference type="PATRIC" id="fig|194439.7.peg.1182"/>
<dbReference type="eggNOG" id="COG1239">
    <property type="taxonomic scope" value="Bacteria"/>
</dbReference>
<dbReference type="HOGENOM" id="CLU_016684_0_2_10"/>
<dbReference type="OrthoDB" id="9775079at2"/>
<dbReference type="UniPathway" id="UPA00669"/>
<dbReference type="Proteomes" id="UP000001007">
    <property type="component" value="Chromosome"/>
</dbReference>
<dbReference type="GO" id="GO:0005524">
    <property type="term" value="F:ATP binding"/>
    <property type="evidence" value="ECO:0007669"/>
    <property type="project" value="UniProtKB-KW"/>
</dbReference>
<dbReference type="GO" id="GO:0016887">
    <property type="term" value="F:ATP hydrolysis activity"/>
    <property type="evidence" value="ECO:0007669"/>
    <property type="project" value="InterPro"/>
</dbReference>
<dbReference type="GO" id="GO:0016851">
    <property type="term" value="F:magnesium chelatase activity"/>
    <property type="evidence" value="ECO:0007669"/>
    <property type="project" value="UniProtKB-EC"/>
</dbReference>
<dbReference type="GO" id="GO:0030494">
    <property type="term" value="P:bacteriochlorophyll biosynthetic process"/>
    <property type="evidence" value="ECO:0007669"/>
    <property type="project" value="UniProtKB-UniPathway"/>
</dbReference>
<dbReference type="GO" id="GO:0015979">
    <property type="term" value="P:photosynthesis"/>
    <property type="evidence" value="ECO:0007669"/>
    <property type="project" value="UniProtKB-KW"/>
</dbReference>
<dbReference type="CDD" id="cd00009">
    <property type="entry name" value="AAA"/>
    <property type="match status" value="1"/>
</dbReference>
<dbReference type="FunFam" id="3.40.50.300:FF:000601">
    <property type="entry name" value="Mg-protoporphyrin IX chelatase"/>
    <property type="match status" value="1"/>
</dbReference>
<dbReference type="Gene3D" id="1.10.8.80">
    <property type="entry name" value="Magnesium chelatase subunit I, C-Terminal domain"/>
    <property type="match status" value="1"/>
</dbReference>
<dbReference type="Gene3D" id="3.40.50.300">
    <property type="entry name" value="P-loop containing nucleotide triphosphate hydrolases"/>
    <property type="match status" value="1"/>
</dbReference>
<dbReference type="InterPro" id="IPR003593">
    <property type="entry name" value="AAA+_ATPase"/>
</dbReference>
<dbReference type="InterPro" id="IPR045006">
    <property type="entry name" value="CHLI-like"/>
</dbReference>
<dbReference type="InterPro" id="IPR041628">
    <property type="entry name" value="ChlI/MoxR_AAA_lid"/>
</dbReference>
<dbReference type="InterPro" id="IPR011775">
    <property type="entry name" value="Mg_chelatase_ATPase-isu"/>
</dbReference>
<dbReference type="InterPro" id="IPR000523">
    <property type="entry name" value="Mg_chelatse_chII-like_cat_dom"/>
</dbReference>
<dbReference type="InterPro" id="IPR027417">
    <property type="entry name" value="P-loop_NTPase"/>
</dbReference>
<dbReference type="NCBIfam" id="TIGR02030">
    <property type="entry name" value="BchI-ChlI"/>
    <property type="match status" value="1"/>
</dbReference>
<dbReference type="PANTHER" id="PTHR32039">
    <property type="entry name" value="MAGNESIUM-CHELATASE SUBUNIT CHLI"/>
    <property type="match status" value="1"/>
</dbReference>
<dbReference type="PANTHER" id="PTHR32039:SF9">
    <property type="entry name" value="MAGNESIUM-CHELATASE SUBUNIT CHLI-2, CHLOROPLASTIC"/>
    <property type="match status" value="1"/>
</dbReference>
<dbReference type="Pfam" id="PF17863">
    <property type="entry name" value="AAA_lid_2"/>
    <property type="match status" value="1"/>
</dbReference>
<dbReference type="Pfam" id="PF01078">
    <property type="entry name" value="Mg_chelatase"/>
    <property type="match status" value="1"/>
</dbReference>
<dbReference type="SMART" id="SM00382">
    <property type="entry name" value="AAA"/>
    <property type="match status" value="1"/>
</dbReference>
<dbReference type="SUPFAM" id="SSF52540">
    <property type="entry name" value="P-loop containing nucleoside triphosphate hydrolases"/>
    <property type="match status" value="1"/>
</dbReference>
<accession>Q93SW1</accession>
<feature type="chain" id="PRO_0000206857" description="Magnesium-chelatase 38 kDa subunit">
    <location>
        <begin position="1"/>
        <end position="392"/>
    </location>
</feature>
<feature type="region of interest" description="Disordered" evidence="2">
    <location>
        <begin position="1"/>
        <end position="21"/>
    </location>
</feature>
<feature type="compositionally biased region" description="Low complexity" evidence="2">
    <location>
        <begin position="1"/>
        <end position="17"/>
    </location>
</feature>
<feature type="binding site" evidence="1">
    <location>
        <begin position="80"/>
        <end position="87"/>
    </location>
    <ligand>
        <name>ATP</name>
        <dbReference type="ChEBI" id="CHEBI:30616"/>
    </ligand>
</feature>
<keyword id="KW-0067">ATP-binding</keyword>
<keyword id="KW-0077">Bacteriochlorophyll biosynthesis</keyword>
<keyword id="KW-0149">Chlorophyll biosynthesis</keyword>
<keyword id="KW-0436">Ligase</keyword>
<keyword id="KW-0547">Nucleotide-binding</keyword>
<keyword id="KW-0602">Photosynthesis</keyword>
<keyword id="KW-1185">Reference proteome</keyword>
<sequence>MTQTANAAKKTTSTKASAAKEAKVKVTAEEKAVTEVKKPAAKKKSALAFPFTAIVGQEEMKLSLILNIIDPRIGGVLVMGHRGTGKSTTVRALAEVLPLIPRVKGDIYNRTVEQYIEMEAAGKGAPAIKPEDVETELIPVPVVDLPLGATEDRVCGTIDIEKALTSGVKAFEPGLLAQSNRGFLYIDEVNLLDDHLVDVLLDVAASGKNVVEREGISIRHPARFVLVGSGNPEEGELRPQLLDRFGLHARITTINDVAKRVQIVKLRREFDEDPEAFMKKVSREQQKLRKKIVAAQQLLPQVTMDDAVLTDIAKLCMNLGIDGHRGELTITRTAHAYAAWEGDKKVTMKHVREIAGLCLRHRLRKDPLETVDAGEKIDRELAKVLGEAEAAA</sequence>
<organism>
    <name type="scientific">Chlorobaculum tepidum (strain ATCC 49652 / DSM 12025 / NBRC 103806 / TLS)</name>
    <name type="common">Chlorobium tepidum</name>
    <dbReference type="NCBI Taxonomy" id="194439"/>
    <lineage>
        <taxon>Bacteria</taxon>
        <taxon>Pseudomonadati</taxon>
        <taxon>Chlorobiota</taxon>
        <taxon>Chlorobiia</taxon>
        <taxon>Chlorobiales</taxon>
        <taxon>Chlorobiaceae</taxon>
        <taxon>Chlorobaculum</taxon>
    </lineage>
</organism>
<protein>
    <recommendedName>
        <fullName>Magnesium-chelatase 38 kDa subunit</fullName>
        <ecNumber>6.6.1.1</ecNumber>
    </recommendedName>
    <alternativeName>
        <fullName>Mg-protoporphyrin IX chelatase</fullName>
    </alternativeName>
</protein>
<name>BCHI_CHLTE</name>